<comment type="function">
    <text evidence="2">Aldolase which can catalyze in vitro the aldolisation reaction between hydroxypyruvate (HPA) or pyruvate (PA) and D-glyceraldehyde (D-GA) (Ref.3). The condensation of hydroxypyruvate and D-glyceraldehyde produces 2-dehydro-D-gluconate as the major product, (3R,4S,5R)-3,4,5,6-tetrahydroxy-2-oxohexanoate and 2-dehydro-D-galactonate (Ref.3). The condensation of pyruvate and D-glyceraldehyde produces 2-dehydro-3-deoxy-L-galactonate as the major product and 2-dehydro-3-deoxy-D-gluconate (Ref.3).</text>
</comment>
<comment type="catalytic activity">
    <reaction evidence="2">
        <text>D-glyceraldehyde + 3-hydroxypyruvate = 2-dehydro-D-gluconate</text>
        <dbReference type="Rhea" id="RHEA:80043"/>
        <dbReference type="ChEBI" id="CHEBI:16808"/>
        <dbReference type="ChEBI" id="CHEBI:17180"/>
        <dbReference type="ChEBI" id="CHEBI:17378"/>
    </reaction>
</comment>
<comment type="catalytic activity">
    <reaction evidence="2">
        <text>D-glyceraldehyde + 3-hydroxypyruvate = (3R,4S,5R)-3,4,5,6-tetrahydroxy-2-oxohexanoate</text>
        <dbReference type="Rhea" id="RHEA:80047"/>
        <dbReference type="ChEBI" id="CHEBI:17180"/>
        <dbReference type="ChEBI" id="CHEBI:17378"/>
        <dbReference type="ChEBI" id="CHEBI:231434"/>
    </reaction>
</comment>
<comment type="catalytic activity">
    <reaction evidence="2">
        <text>D-glyceraldehyde + 3-hydroxypyruvate = 2-dehydro-D-galactonate</text>
        <dbReference type="Rhea" id="RHEA:80051"/>
        <dbReference type="ChEBI" id="CHEBI:17180"/>
        <dbReference type="ChEBI" id="CHEBI:17378"/>
        <dbReference type="ChEBI" id="CHEBI:28023"/>
    </reaction>
</comment>
<comment type="catalytic activity">
    <reaction evidence="2">
        <text>D-glyceraldehyde + pyruvate = 2-dehydro-3-deoxy-L-galactonate</text>
        <dbReference type="Rhea" id="RHEA:80055"/>
        <dbReference type="ChEBI" id="CHEBI:15361"/>
        <dbReference type="ChEBI" id="CHEBI:17378"/>
        <dbReference type="ChEBI" id="CHEBI:75545"/>
    </reaction>
</comment>
<comment type="catalytic activity">
    <reaction evidence="2">
        <text>2-dehydro-3-deoxy-D-gluconate = D-glyceraldehyde + pyruvate</text>
        <dbReference type="Rhea" id="RHEA:35583"/>
        <dbReference type="ChEBI" id="CHEBI:15361"/>
        <dbReference type="ChEBI" id="CHEBI:17378"/>
        <dbReference type="ChEBI" id="CHEBI:57990"/>
    </reaction>
</comment>
<comment type="cofactor">
    <cofactor evidence="1">
        <name>a divalent metal cation</name>
        <dbReference type="ChEBI" id="CHEBI:60240"/>
    </cofactor>
</comment>
<comment type="similarity">
    <text evidence="4">Belongs to the HpcH/HpaI aldolase family.</text>
</comment>
<protein>
    <recommendedName>
        <fullName evidence="3">Hydroxypyruvate/pyruvate aldolase</fullName>
        <shortName evidence="3">HPA/PA aldolase</shortName>
        <ecNumber evidence="2">4.1.2.-</ecNumber>
    </recommendedName>
</protein>
<sequence length="269" mass="28256">MPANNPFKTALAARQAQIGLWLSMATPYLAEVSATAGFDWLLIDGEHAPNDLRSTLHALQAVAPYPVQPVVRAVAGEVPLIKQLLDIGVRSLLVPMVDTAEQARMVVSATRYPPQGIRGVGSAIARASQWSARTDYLDVADDEVCLLVQAETVTALQNLEAICAVDGIDGVFIGPADLAASMGHRGRPGHPEVQAAIEGAMRTIIASGKAAGTLTSDPALARRYLDLGCTFVATGVDVMLYANAARKLAASFREQPSDAPAADKPSAAY</sequence>
<name>HPAAL_CUPNH</name>
<accession>Q0K203</accession>
<organism>
    <name type="scientific">Cupriavidus necator (strain ATCC 17699 / DSM 428 / KCTC 22496 / NCIMB 10442 / H16 / Stanier 337)</name>
    <name type="common">Ralstonia eutropha</name>
    <dbReference type="NCBI Taxonomy" id="381666"/>
    <lineage>
        <taxon>Bacteria</taxon>
        <taxon>Pseudomonadati</taxon>
        <taxon>Pseudomonadota</taxon>
        <taxon>Betaproteobacteria</taxon>
        <taxon>Burkholderiales</taxon>
        <taxon>Burkholderiaceae</taxon>
        <taxon>Cupriavidus</taxon>
    </lineage>
</organism>
<gene>
    <name evidence="5" type="ordered locus">H16_B1180</name>
    <name evidence="6" type="ORF">E6A55_25170</name>
</gene>
<keyword id="KW-0456">Lyase</keyword>
<keyword id="KW-0479">Metal-binding</keyword>
<keyword id="KW-0670">Pyruvate</keyword>
<keyword id="KW-1185">Reference proteome</keyword>
<evidence type="ECO:0000250" key="1">
    <source>
        <dbReference type="UniProtKB" id="Q47098"/>
    </source>
</evidence>
<evidence type="ECO:0000269" key="2">
    <source ref="3"/>
</evidence>
<evidence type="ECO:0000303" key="3">
    <source ref="3"/>
</evidence>
<evidence type="ECO:0000305" key="4"/>
<evidence type="ECO:0000312" key="5">
    <source>
        <dbReference type="EMBL" id="CAJ95971.1"/>
    </source>
</evidence>
<evidence type="ECO:0000312" key="6">
    <source>
        <dbReference type="EMBL" id="QCC03844.1"/>
    </source>
</evidence>
<dbReference type="EC" id="4.1.2.-" evidence="2"/>
<dbReference type="EMBL" id="AM260480">
    <property type="protein sequence ID" value="CAJ95971.1"/>
    <property type="molecule type" value="Genomic_DNA"/>
</dbReference>
<dbReference type="EMBL" id="CP039288">
    <property type="protein sequence ID" value="QCC03844.1"/>
    <property type="molecule type" value="Genomic_DNA"/>
</dbReference>
<dbReference type="RefSeq" id="WP_011617062.1">
    <property type="nucleotide sequence ID" value="NC_008314.1"/>
</dbReference>
<dbReference type="SMR" id="Q0K203"/>
<dbReference type="STRING" id="381666.H16_B1180"/>
<dbReference type="KEGG" id="reh:H16_B1180"/>
<dbReference type="eggNOG" id="COG3836">
    <property type="taxonomic scope" value="Bacteria"/>
</dbReference>
<dbReference type="HOGENOM" id="CLU_059964_1_0_4"/>
<dbReference type="OrthoDB" id="86160at2"/>
<dbReference type="Proteomes" id="UP000008210">
    <property type="component" value="Chromosome 2"/>
</dbReference>
<dbReference type="Proteomes" id="UP000296079">
    <property type="component" value="Chromosome 2"/>
</dbReference>
<dbReference type="GO" id="GO:0005737">
    <property type="term" value="C:cytoplasm"/>
    <property type="evidence" value="ECO:0007669"/>
    <property type="project" value="TreeGrafter"/>
</dbReference>
<dbReference type="GO" id="GO:0016832">
    <property type="term" value="F:aldehyde-lyase activity"/>
    <property type="evidence" value="ECO:0007669"/>
    <property type="project" value="TreeGrafter"/>
</dbReference>
<dbReference type="GO" id="GO:0046872">
    <property type="term" value="F:metal ion binding"/>
    <property type="evidence" value="ECO:0007669"/>
    <property type="project" value="UniProtKB-KW"/>
</dbReference>
<dbReference type="GO" id="GO:0010124">
    <property type="term" value="P:phenylacetate catabolic process"/>
    <property type="evidence" value="ECO:0007669"/>
    <property type="project" value="InterPro"/>
</dbReference>
<dbReference type="FunFam" id="3.20.20.60:FF:000004">
    <property type="entry name" value="5-keto-4-deoxy-D-glucarate aldolase"/>
    <property type="match status" value="1"/>
</dbReference>
<dbReference type="Gene3D" id="3.20.20.60">
    <property type="entry name" value="Phosphoenolpyruvate-binding domains"/>
    <property type="match status" value="1"/>
</dbReference>
<dbReference type="InterPro" id="IPR005000">
    <property type="entry name" value="Aldolase/citrate-lyase_domain"/>
</dbReference>
<dbReference type="InterPro" id="IPR012689">
    <property type="entry name" value="HpaI"/>
</dbReference>
<dbReference type="InterPro" id="IPR050251">
    <property type="entry name" value="HpcH-HpaI_aldolase"/>
</dbReference>
<dbReference type="InterPro" id="IPR015813">
    <property type="entry name" value="Pyrv/PenolPyrv_kinase-like_dom"/>
</dbReference>
<dbReference type="InterPro" id="IPR040442">
    <property type="entry name" value="Pyrv_kinase-like_dom_sf"/>
</dbReference>
<dbReference type="NCBIfam" id="TIGR02311">
    <property type="entry name" value="HpaI"/>
    <property type="match status" value="1"/>
</dbReference>
<dbReference type="PANTHER" id="PTHR30502">
    <property type="entry name" value="2-KETO-3-DEOXY-L-RHAMNONATE ALDOLASE"/>
    <property type="match status" value="1"/>
</dbReference>
<dbReference type="PANTHER" id="PTHR30502:SF0">
    <property type="entry name" value="PHOSPHOENOLPYRUVATE CARBOXYLASE FAMILY PROTEIN"/>
    <property type="match status" value="1"/>
</dbReference>
<dbReference type="Pfam" id="PF03328">
    <property type="entry name" value="HpcH_HpaI"/>
    <property type="match status" value="1"/>
</dbReference>
<dbReference type="SUPFAM" id="SSF51621">
    <property type="entry name" value="Phosphoenolpyruvate/pyruvate domain"/>
    <property type="match status" value="1"/>
</dbReference>
<proteinExistence type="evidence at protein level"/>
<reference key="1">
    <citation type="journal article" date="2006" name="Nat. Biotechnol.">
        <title>Genome sequence of the bioplastic-producing 'Knallgas' bacterium Ralstonia eutropha H16.</title>
        <authorList>
            <person name="Pohlmann A."/>
            <person name="Fricke W.F."/>
            <person name="Reinecke F."/>
            <person name="Kusian B."/>
            <person name="Liesegang H."/>
            <person name="Cramm R."/>
            <person name="Eitinger T."/>
            <person name="Ewering C."/>
            <person name="Poetter M."/>
            <person name="Schwartz E."/>
            <person name="Strittmatter A."/>
            <person name="Voss I."/>
            <person name="Gottschalk G."/>
            <person name="Steinbuechel A."/>
            <person name="Friedrich B."/>
            <person name="Bowien B."/>
        </authorList>
    </citation>
    <scope>NUCLEOTIDE SEQUENCE [LARGE SCALE GENOMIC DNA]</scope>
    <source>
        <strain>ATCC 17699 / DSM 428 / KCTC 22496 / NCIMB 10442 / H16 / Stanier 337</strain>
    </source>
</reference>
<reference key="2">
    <citation type="submission" date="2019-04" db="EMBL/GenBank/DDBJ databases">
        <title>Long-read de novo sequencing of Cupriavidus necator H16.</title>
        <authorList>
            <person name="Little G.T."/>
            <person name="Ehsaan M."/>
            <person name="Arenas-Lopez C."/>
            <person name="Jawed K."/>
            <person name="Winzer K."/>
            <person name="Kovacs K."/>
            <person name="Malys N."/>
            <person name="Minton N.P."/>
        </authorList>
    </citation>
    <scope>NUCLEOTIDE SEQUENCE [LARGE SCALE GENOMIC DNA]</scope>
    <source>
        <strain>ATCC 17699 / DSM 428 / KCTC 22496 / NCIMB 10442 / H16 / Stanier 337</strain>
    </source>
</reference>
<reference key="3">
    <citation type="journal article" date="2017" name="Green Chem.">
        <title>Expanding the reaction space of aldolases using hydroxypyruvate as a nucleophilic substrate.</title>
        <authorList>
            <person name="de Berardinis V."/>
            <person name="Guerard-Helaine C."/>
            <person name="Darii E."/>
            <person name="Bastard K."/>
            <person name="Helaine V."/>
            <person name="Mariage A."/>
            <person name="Petit J.-L."/>
            <person name="Poupard N."/>
            <person name="Sanchez-Moreno I."/>
            <person name="Stam M."/>
            <person name="Gefflaut T."/>
            <person name="Salanoubat M."/>
            <person name="Lemaire M."/>
        </authorList>
    </citation>
    <scope>FUNCTION</scope>
    <scope>CATALYTIC ACTIVITY</scope>
</reference>
<feature type="chain" id="PRO_0000460949" description="Hydroxypyruvate/pyruvate aldolase">
    <location>
        <begin position="1"/>
        <end position="269"/>
    </location>
</feature>
<feature type="active site" description="Proton acceptor" evidence="1">
    <location>
        <position position="47"/>
    </location>
</feature>
<feature type="binding site" evidence="1">
    <location>
        <position position="151"/>
    </location>
    <ligand>
        <name>a divalent metal cation</name>
        <dbReference type="ChEBI" id="CHEBI:60240"/>
    </ligand>
</feature>
<feature type="binding site" evidence="1">
    <location>
        <position position="177"/>
    </location>
    <ligand>
        <name>a divalent metal cation</name>
        <dbReference type="ChEBI" id="CHEBI:60240"/>
    </ligand>
</feature>
<feature type="site" description="Transition state stabilizer" evidence="1">
    <location>
        <position position="72"/>
    </location>
</feature>
<feature type="site" description="Increases basicity of active site His" evidence="1">
    <location>
        <position position="86"/>
    </location>
</feature>